<dbReference type="EMBL" id="BC044505">
    <property type="protein sequence ID" value="AAH44505.1"/>
    <property type="molecule type" value="mRNA"/>
</dbReference>
<dbReference type="EMBL" id="BC067549">
    <property type="protein sequence ID" value="AAH67549.1"/>
    <property type="molecule type" value="mRNA"/>
</dbReference>
<dbReference type="RefSeq" id="NP_997773.1">
    <property type="nucleotide sequence ID" value="NM_212608.1"/>
</dbReference>
<dbReference type="SMR" id="Q803F5"/>
<dbReference type="FunCoup" id="Q803F5">
    <property type="interactions" value="1643"/>
</dbReference>
<dbReference type="STRING" id="7955.ENSDARP00000004202"/>
<dbReference type="GlyCosmos" id="Q803F5">
    <property type="glycosylation" value="1 site, No reported glycans"/>
</dbReference>
<dbReference type="PaxDb" id="7955-ENSDARP00000004202"/>
<dbReference type="GeneID" id="266637"/>
<dbReference type="KEGG" id="dre:266637"/>
<dbReference type="AGR" id="ZFIN:ZDB-GENE-020919-1"/>
<dbReference type="CTD" id="57136"/>
<dbReference type="ZFIN" id="ZDB-GENE-020919-1">
    <property type="gene designation" value="apmap"/>
</dbReference>
<dbReference type="eggNOG" id="KOG1520">
    <property type="taxonomic scope" value="Eukaryota"/>
</dbReference>
<dbReference type="InParanoid" id="Q803F5"/>
<dbReference type="OrthoDB" id="5307922at2759"/>
<dbReference type="PhylomeDB" id="Q803F5"/>
<dbReference type="TreeFam" id="TF316475"/>
<dbReference type="PRO" id="PR:Q803F5"/>
<dbReference type="Proteomes" id="UP000000437">
    <property type="component" value="Chromosome 13"/>
</dbReference>
<dbReference type="GO" id="GO:0016020">
    <property type="term" value="C:membrane"/>
    <property type="evidence" value="ECO:0007669"/>
    <property type="project" value="UniProtKB-SubCell"/>
</dbReference>
<dbReference type="GO" id="GO:0004064">
    <property type="term" value="F:arylesterase activity"/>
    <property type="evidence" value="ECO:0000318"/>
    <property type="project" value="GO_Central"/>
</dbReference>
<dbReference type="FunFam" id="2.120.10.30:FF:000041">
    <property type="entry name" value="adipocyte plasma membrane-associated protein"/>
    <property type="match status" value="1"/>
</dbReference>
<dbReference type="Gene3D" id="2.120.10.30">
    <property type="entry name" value="TolB, C-terminal domain"/>
    <property type="match status" value="1"/>
</dbReference>
<dbReference type="InterPro" id="IPR011042">
    <property type="entry name" value="6-blade_b-propeller_TolB-like"/>
</dbReference>
<dbReference type="InterPro" id="IPR018119">
    <property type="entry name" value="Strictosidine_synth_cons-reg"/>
</dbReference>
<dbReference type="PANTHER" id="PTHR10426:SF130">
    <property type="entry name" value="ADIPOCYTE PLASMA MEMBRANE-ASSOCIATED PROTEIN"/>
    <property type="match status" value="1"/>
</dbReference>
<dbReference type="PANTHER" id="PTHR10426">
    <property type="entry name" value="STRICTOSIDINE SYNTHASE-RELATED"/>
    <property type="match status" value="1"/>
</dbReference>
<dbReference type="Pfam" id="PF20067">
    <property type="entry name" value="SSL_N"/>
    <property type="match status" value="1"/>
</dbReference>
<dbReference type="Pfam" id="PF03088">
    <property type="entry name" value="Str_synth"/>
    <property type="match status" value="1"/>
</dbReference>
<dbReference type="SUPFAM" id="SSF63829">
    <property type="entry name" value="Calcium-dependent phosphotriesterase"/>
    <property type="match status" value="1"/>
</dbReference>
<reference key="1">
    <citation type="submission" date="2003-01" db="EMBL/GenBank/DDBJ databases">
        <authorList>
            <consortium name="NIH - Zebrafish Gene Collection (ZGC) project"/>
        </authorList>
    </citation>
    <scope>NUCLEOTIDE SEQUENCE [LARGE SCALE MRNA]</scope>
    <source>
        <strain>AB</strain>
        <tissue>Kidney</tissue>
    </source>
</reference>
<feature type="chain" id="PRO_0000370860" description="Adipocyte plasma membrane-associated protein">
    <location>
        <begin position="1"/>
        <end position="415"/>
    </location>
</feature>
<feature type="topological domain" description="Cytoplasmic" evidence="2">
    <location>
        <begin position="1"/>
        <end position="39"/>
    </location>
</feature>
<feature type="transmembrane region" description="Helical" evidence="2">
    <location>
        <begin position="40"/>
        <end position="60"/>
    </location>
</feature>
<feature type="topological domain" description="Extracellular" evidence="2">
    <location>
        <begin position="61"/>
        <end position="412"/>
    </location>
</feature>
<feature type="glycosylation site" description="N-linked (GlcNAc...) asparagine" evidence="2">
    <location>
        <position position="159"/>
    </location>
</feature>
<feature type="sequence conflict" description="In Ref. 1; AAH67549." evidence="3" ref="1">
    <original>S</original>
    <variation>G</variation>
    <location>
        <position position="368"/>
    </location>
</feature>
<protein>
    <recommendedName>
        <fullName>Adipocyte plasma membrane-associated protein</fullName>
    </recommendedName>
</protein>
<name>APMAP_DANRE</name>
<sequence length="415" mass="46744">MNEPEGLRFRRLNRPHIITDETHEPQYKATSTYSGKVFRVTLLTMVAFLLLPLLVVVFVLESPIQPEVFSLNEPPLMTGCYEPNLKLRQAERLFEERLVGPESLANIGDVFYTGTADGKIVKIEGRNIHVLATIGKPPCGSREHEHTCGRPLGIRVGPNGTLFVADAYLGLFEVNPVTGEVKSLVSTEKRIAGRRLGFVNDLDVTQDGKKVYFTDSSSRWQRRDFMHLIMEATADGRVLEYDTETKEVNVMMENLRFPNGIQLFPDEESVLVAETTMARIKRVHVSGLNKGGMDTFIENLPGFPDNIRRSSSGGYWVAMSAVRPNPGFSMLDFLSQRPWLKKLIFKLFSQDTLLKFVPRYSLVVELQSDGTCVRSFHDPQGLVSAYSSEAHEYSGHLYLGSFRSPYLCKLDLSKV</sequence>
<keyword id="KW-0325">Glycoprotein</keyword>
<keyword id="KW-0472">Membrane</keyword>
<keyword id="KW-1185">Reference proteome</keyword>
<keyword id="KW-0735">Signal-anchor</keyword>
<keyword id="KW-0812">Transmembrane</keyword>
<keyword id="KW-1133">Transmembrane helix</keyword>
<proteinExistence type="evidence at transcript level"/>
<gene>
    <name type="primary">apmap</name>
    <name type="synonym">bscv</name>
    <name type="ORF">zgc:55833</name>
    <name type="ORF">zgc:85628</name>
</gene>
<organism>
    <name type="scientific">Danio rerio</name>
    <name type="common">Zebrafish</name>
    <name type="synonym">Brachydanio rerio</name>
    <dbReference type="NCBI Taxonomy" id="7955"/>
    <lineage>
        <taxon>Eukaryota</taxon>
        <taxon>Metazoa</taxon>
        <taxon>Chordata</taxon>
        <taxon>Craniata</taxon>
        <taxon>Vertebrata</taxon>
        <taxon>Euteleostomi</taxon>
        <taxon>Actinopterygii</taxon>
        <taxon>Neopterygii</taxon>
        <taxon>Teleostei</taxon>
        <taxon>Ostariophysi</taxon>
        <taxon>Cypriniformes</taxon>
        <taxon>Danionidae</taxon>
        <taxon>Danioninae</taxon>
        <taxon>Danio</taxon>
    </lineage>
</organism>
<accession>Q803F5</accession>
<accession>Q6NWL2</accession>
<evidence type="ECO:0000250" key="1"/>
<evidence type="ECO:0000255" key="2"/>
<evidence type="ECO:0000305" key="3"/>
<comment type="subcellular location">
    <subcellularLocation>
        <location evidence="1">Membrane</location>
        <topology evidence="1">Single-pass type II membrane protein</topology>
    </subcellularLocation>
</comment>
<comment type="similarity">
    <text evidence="3">Belongs to the strictosidine synthase family.</text>
</comment>